<accession>B6YQE4</accession>
<gene>
    <name evidence="1" type="primary">truA</name>
    <name type="ordered locus">CFPG_153</name>
</gene>
<comment type="function">
    <text evidence="1">Formation of pseudouridine at positions 38, 39 and 40 in the anticodon stem and loop of transfer RNAs.</text>
</comment>
<comment type="catalytic activity">
    <reaction evidence="1">
        <text>uridine(38/39/40) in tRNA = pseudouridine(38/39/40) in tRNA</text>
        <dbReference type="Rhea" id="RHEA:22376"/>
        <dbReference type="Rhea" id="RHEA-COMP:10085"/>
        <dbReference type="Rhea" id="RHEA-COMP:10087"/>
        <dbReference type="ChEBI" id="CHEBI:65314"/>
        <dbReference type="ChEBI" id="CHEBI:65315"/>
        <dbReference type="EC" id="5.4.99.12"/>
    </reaction>
</comment>
<comment type="subunit">
    <text evidence="1">Homodimer.</text>
</comment>
<comment type="similarity">
    <text evidence="1">Belongs to the tRNA pseudouridine synthase TruA family.</text>
</comment>
<reference key="1">
    <citation type="journal article" date="2008" name="Science">
        <title>Genome of an endosymbiont coupling N2 fixation to cellulolysis within RT protist cells in termite gut.</title>
        <authorList>
            <person name="Hongoh Y."/>
            <person name="Sharma V.K."/>
            <person name="Prakash T."/>
            <person name="Noda S."/>
            <person name="Toh H."/>
            <person name="Taylor T.D."/>
            <person name="Kudo T."/>
            <person name="Sakaki Y."/>
            <person name="Toyoda A."/>
            <person name="Hattori M."/>
            <person name="Ohkuma M."/>
        </authorList>
    </citation>
    <scope>NUCLEOTIDE SEQUENCE [LARGE SCALE GENOMIC DNA]</scope>
</reference>
<feature type="chain" id="PRO_1000097717" description="tRNA pseudouridine synthase A">
    <location>
        <begin position="1"/>
        <end position="249"/>
    </location>
</feature>
<feature type="active site" description="Nucleophile" evidence="1">
    <location>
        <position position="52"/>
    </location>
</feature>
<feature type="binding site" evidence="1">
    <location>
        <position position="110"/>
    </location>
    <ligand>
        <name>substrate</name>
    </ligand>
</feature>
<name>TRUA_AZOPC</name>
<organism>
    <name type="scientific">Azobacteroides pseudotrichonymphae genomovar. CFP2</name>
    <dbReference type="NCBI Taxonomy" id="511995"/>
    <lineage>
        <taxon>Bacteria</taxon>
        <taxon>Pseudomonadati</taxon>
        <taxon>Bacteroidota</taxon>
        <taxon>Bacteroidia</taxon>
        <taxon>Bacteroidales</taxon>
        <taxon>Candidatus Azobacteroides</taxon>
    </lineage>
</organism>
<proteinExistence type="inferred from homology"/>
<protein>
    <recommendedName>
        <fullName evidence="1">tRNA pseudouridine synthase A</fullName>
        <ecNumber evidence="1">5.4.99.12</ecNumber>
    </recommendedName>
    <alternativeName>
        <fullName evidence="1">tRNA pseudouridine(38-40) synthase</fullName>
    </alternativeName>
    <alternativeName>
        <fullName evidence="1">tRNA pseudouridylate synthase I</fullName>
    </alternativeName>
    <alternativeName>
        <fullName evidence="1">tRNA-uridine isomerase I</fullName>
    </alternativeName>
</protein>
<sequence length="249" mass="29004">MNRYFIYLAYNGRNYCGWQIQPNGITVQQRIQQCLSILLRKSVTIIGAGRTDAGVHANLMTAHFDWEEILSTTSLTKRLNGILPCDILIYKIIPVKKNAHARFDAISRKYKYYITYQKNPFRNEQLFRLKQPLNKHLMNEASNILSEYSDFTSFCKLHSNTRTNVCRISKAEWNTVQGIDIFTIKADRFLRNMVRSIVGTMIDIGKNKLSITDFRKIIESKNHIMLKSSVPAHALFLTDIEYPNWIFKN</sequence>
<dbReference type="EC" id="5.4.99.12" evidence="1"/>
<dbReference type="EMBL" id="AP010656">
    <property type="protein sequence ID" value="BAG83416.1"/>
    <property type="molecule type" value="Genomic_DNA"/>
</dbReference>
<dbReference type="RefSeq" id="WP_012573177.1">
    <property type="nucleotide sequence ID" value="NC_011565.1"/>
</dbReference>
<dbReference type="SMR" id="B6YQE4"/>
<dbReference type="STRING" id="511995.CFPG_153"/>
<dbReference type="KEGG" id="aps:CFPG_153"/>
<dbReference type="eggNOG" id="COG0101">
    <property type="taxonomic scope" value="Bacteria"/>
</dbReference>
<dbReference type="HOGENOM" id="CLU_014673_0_1_10"/>
<dbReference type="OrthoDB" id="9811823at2"/>
<dbReference type="Proteomes" id="UP000000723">
    <property type="component" value="Chromosome"/>
</dbReference>
<dbReference type="GO" id="GO:0003723">
    <property type="term" value="F:RNA binding"/>
    <property type="evidence" value="ECO:0007669"/>
    <property type="project" value="InterPro"/>
</dbReference>
<dbReference type="GO" id="GO:0160147">
    <property type="term" value="F:tRNA pseudouridine(38-40) synthase activity"/>
    <property type="evidence" value="ECO:0007669"/>
    <property type="project" value="UniProtKB-EC"/>
</dbReference>
<dbReference type="GO" id="GO:0031119">
    <property type="term" value="P:tRNA pseudouridine synthesis"/>
    <property type="evidence" value="ECO:0007669"/>
    <property type="project" value="UniProtKB-UniRule"/>
</dbReference>
<dbReference type="CDD" id="cd02570">
    <property type="entry name" value="PseudoU_synth_EcTruA"/>
    <property type="match status" value="1"/>
</dbReference>
<dbReference type="FunFam" id="3.30.70.580:FF:000001">
    <property type="entry name" value="tRNA pseudouridine synthase A"/>
    <property type="match status" value="1"/>
</dbReference>
<dbReference type="Gene3D" id="3.30.70.660">
    <property type="entry name" value="Pseudouridine synthase I, catalytic domain, C-terminal subdomain"/>
    <property type="match status" value="1"/>
</dbReference>
<dbReference type="Gene3D" id="3.30.70.580">
    <property type="entry name" value="Pseudouridine synthase I, catalytic domain, N-terminal subdomain"/>
    <property type="match status" value="1"/>
</dbReference>
<dbReference type="HAMAP" id="MF_00171">
    <property type="entry name" value="TruA"/>
    <property type="match status" value="1"/>
</dbReference>
<dbReference type="InterPro" id="IPR020103">
    <property type="entry name" value="PsdUridine_synth_cat_dom_sf"/>
</dbReference>
<dbReference type="InterPro" id="IPR001406">
    <property type="entry name" value="PsdUridine_synth_TruA"/>
</dbReference>
<dbReference type="InterPro" id="IPR020097">
    <property type="entry name" value="PsdUridine_synth_TruA_a/b_dom"/>
</dbReference>
<dbReference type="InterPro" id="IPR020095">
    <property type="entry name" value="PsdUridine_synth_TruA_C"/>
</dbReference>
<dbReference type="InterPro" id="IPR020094">
    <property type="entry name" value="TruA/RsuA/RluB/E/F_N"/>
</dbReference>
<dbReference type="NCBIfam" id="TIGR00071">
    <property type="entry name" value="hisT_truA"/>
    <property type="match status" value="1"/>
</dbReference>
<dbReference type="PANTHER" id="PTHR11142">
    <property type="entry name" value="PSEUDOURIDYLATE SYNTHASE"/>
    <property type="match status" value="1"/>
</dbReference>
<dbReference type="PANTHER" id="PTHR11142:SF0">
    <property type="entry name" value="TRNA PSEUDOURIDINE SYNTHASE-LIKE 1"/>
    <property type="match status" value="1"/>
</dbReference>
<dbReference type="Pfam" id="PF01416">
    <property type="entry name" value="PseudoU_synth_1"/>
    <property type="match status" value="2"/>
</dbReference>
<dbReference type="PIRSF" id="PIRSF001430">
    <property type="entry name" value="tRNA_psdUrid_synth"/>
    <property type="match status" value="1"/>
</dbReference>
<dbReference type="SUPFAM" id="SSF55120">
    <property type="entry name" value="Pseudouridine synthase"/>
    <property type="match status" value="1"/>
</dbReference>
<evidence type="ECO:0000255" key="1">
    <source>
        <dbReference type="HAMAP-Rule" id="MF_00171"/>
    </source>
</evidence>
<keyword id="KW-0413">Isomerase</keyword>
<keyword id="KW-1185">Reference proteome</keyword>
<keyword id="KW-0819">tRNA processing</keyword>